<evidence type="ECO:0000250" key="1"/>
<evidence type="ECO:0000256" key="2">
    <source>
        <dbReference type="SAM" id="MobiDB-lite"/>
    </source>
</evidence>
<evidence type="ECO:0000305" key="3"/>
<dbReference type="EMBL" id="BC123686">
    <property type="protein sequence ID" value="AAI23687.1"/>
    <property type="molecule type" value="mRNA"/>
</dbReference>
<dbReference type="RefSeq" id="NP_001069665.1">
    <property type="nucleotide sequence ID" value="NM_001076197.1"/>
</dbReference>
<dbReference type="RefSeq" id="XP_005227489.1">
    <property type="nucleotide sequence ID" value="XM_005227432.5"/>
</dbReference>
<dbReference type="SMR" id="Q08DL1"/>
<dbReference type="FunCoup" id="Q08DL1">
    <property type="interactions" value="555"/>
</dbReference>
<dbReference type="STRING" id="9913.ENSBTAP00000046384"/>
<dbReference type="PaxDb" id="9913-ENSBTAP00000046384"/>
<dbReference type="Ensembl" id="ENSBTAT00000049498.4">
    <property type="protein sequence ID" value="ENSBTAP00000046384.2"/>
    <property type="gene ID" value="ENSBTAG00000035018.4"/>
</dbReference>
<dbReference type="GeneID" id="540006"/>
<dbReference type="KEGG" id="bta:540006"/>
<dbReference type="CTD" id="170261"/>
<dbReference type="VEuPathDB" id="HostDB:ENSBTAG00000035018"/>
<dbReference type="VGNC" id="VGNC:50125">
    <property type="gene designation" value="ZCCHC12"/>
</dbReference>
<dbReference type="eggNOG" id="ENOG502RU0T">
    <property type="taxonomic scope" value="Eukaryota"/>
</dbReference>
<dbReference type="GeneTree" id="ENSGT01030000234522"/>
<dbReference type="HOGENOM" id="CLU_686127_0_0_1"/>
<dbReference type="InParanoid" id="Q08DL1"/>
<dbReference type="OMA" id="RKHTIRC"/>
<dbReference type="OrthoDB" id="115435at2759"/>
<dbReference type="TreeFam" id="TF335054"/>
<dbReference type="Proteomes" id="UP000009136">
    <property type="component" value="Chromosome X"/>
</dbReference>
<dbReference type="Bgee" id="ENSBTAG00000035018">
    <property type="expression patterns" value="Expressed in spermatocyte and 89 other cell types or tissues"/>
</dbReference>
<dbReference type="GO" id="GO:0005634">
    <property type="term" value="C:nucleus"/>
    <property type="evidence" value="ECO:0000318"/>
    <property type="project" value="GO_Central"/>
</dbReference>
<dbReference type="GO" id="GO:0003676">
    <property type="term" value="F:nucleic acid binding"/>
    <property type="evidence" value="ECO:0007669"/>
    <property type="project" value="InterPro"/>
</dbReference>
<dbReference type="GO" id="GO:0008270">
    <property type="term" value="F:zinc ion binding"/>
    <property type="evidence" value="ECO:0007669"/>
    <property type="project" value="UniProtKB-KW"/>
</dbReference>
<dbReference type="InterPro" id="IPR026523">
    <property type="entry name" value="PNMA"/>
</dbReference>
<dbReference type="InterPro" id="IPR048270">
    <property type="entry name" value="PNMA_C"/>
</dbReference>
<dbReference type="InterPro" id="IPR036875">
    <property type="entry name" value="Znf_CCHC_sf"/>
</dbReference>
<dbReference type="PANTHER" id="PTHR23095">
    <property type="entry name" value="PARANEOPLASTIC ANTIGEN"/>
    <property type="match status" value="1"/>
</dbReference>
<dbReference type="PANTHER" id="PTHR23095:SF18">
    <property type="entry name" value="ZINC FINGER CCHC DOMAIN-CONTAINING PROTEIN 12"/>
    <property type="match status" value="1"/>
</dbReference>
<dbReference type="Pfam" id="PF14893">
    <property type="entry name" value="PNMA"/>
    <property type="match status" value="1"/>
</dbReference>
<dbReference type="SUPFAM" id="SSF57756">
    <property type="entry name" value="Retrovirus zinc finger-like domains"/>
    <property type="match status" value="1"/>
</dbReference>
<sequence>MTSIIARMSNSRRQNTSLPPWAHSMLRSLERSLGPLMAILAERNLKLFSGRVVPAQGEETFENWLIQVNEVLPDWNMSEEEKLRRLIKTLRGPAREVMLLLQAANPNLSVADFLHAMKLVFGESESSVTAHSKFFNTLQAQGEKASLYVIRLEVQLQNAIQAGIIAQKDANQSRLHQFLLGAELNGDLRFRLKNLLRMYANEQERLPSFLELIRMIREEEDWDDIFIKQKRAKRSESVVARATRPVAFGGSPPIVIDNKDCNVIEIDDTPDDSDEDVILVGESQDLPRSFSDSPPSRRRARPQDQVLIIDSPNNSQFPSPCTSGGSGYKNDGPGNMRRTRKRKHTIRCSYCGEEGHSKETCDNESNKAQMFENLIITLQELAHTEERSREAPVEPSDPCELQ</sequence>
<protein>
    <recommendedName>
        <fullName>Zinc finger CCHC domain-containing protein 12</fullName>
    </recommendedName>
</protein>
<keyword id="KW-0479">Metal-binding</keyword>
<keyword id="KW-1185">Reference proteome</keyword>
<keyword id="KW-0804">Transcription</keyword>
<keyword id="KW-0805">Transcription regulation</keyword>
<keyword id="KW-0862">Zinc</keyword>
<keyword id="KW-0863">Zinc-finger</keyword>
<reference key="1">
    <citation type="submission" date="2006-09" db="EMBL/GenBank/DDBJ databases">
        <authorList>
            <consortium name="NIH - Mammalian Gene Collection (MGC) project"/>
        </authorList>
    </citation>
    <scope>NUCLEOTIDE SEQUENCE [LARGE SCALE MRNA]</scope>
    <source>
        <strain>Hereford</strain>
        <tissue>Fetal muscle</tissue>
    </source>
</reference>
<organism>
    <name type="scientific">Bos taurus</name>
    <name type="common">Bovine</name>
    <dbReference type="NCBI Taxonomy" id="9913"/>
    <lineage>
        <taxon>Eukaryota</taxon>
        <taxon>Metazoa</taxon>
        <taxon>Chordata</taxon>
        <taxon>Craniata</taxon>
        <taxon>Vertebrata</taxon>
        <taxon>Euteleostomi</taxon>
        <taxon>Mammalia</taxon>
        <taxon>Eutheria</taxon>
        <taxon>Laurasiatheria</taxon>
        <taxon>Artiodactyla</taxon>
        <taxon>Ruminantia</taxon>
        <taxon>Pecora</taxon>
        <taxon>Bovidae</taxon>
        <taxon>Bovinae</taxon>
        <taxon>Bos</taxon>
    </lineage>
</organism>
<gene>
    <name type="primary">ZCCHC12</name>
</gene>
<proteinExistence type="evidence at transcript level"/>
<accession>Q08DL1</accession>
<feature type="chain" id="PRO_0000346786" description="Zinc finger CCHC domain-containing protein 12">
    <location>
        <begin position="1"/>
        <end position="402"/>
    </location>
</feature>
<feature type="zinc finger region" description="CCHC-type">
    <location>
        <begin position="346"/>
        <end position="363"/>
    </location>
</feature>
<feature type="region of interest" description="Disordered" evidence="2">
    <location>
        <begin position="268"/>
        <end position="342"/>
    </location>
</feature>
<feature type="region of interest" description="Disordered" evidence="2">
    <location>
        <begin position="383"/>
        <end position="402"/>
    </location>
</feature>
<feature type="compositionally biased region" description="Acidic residues" evidence="2">
    <location>
        <begin position="268"/>
        <end position="277"/>
    </location>
</feature>
<feature type="compositionally biased region" description="Polar residues" evidence="2">
    <location>
        <begin position="311"/>
        <end position="323"/>
    </location>
</feature>
<feature type="compositionally biased region" description="Basic and acidic residues" evidence="2">
    <location>
        <begin position="383"/>
        <end position="392"/>
    </location>
</feature>
<name>ZCH12_BOVIN</name>
<comment type="function">
    <text evidence="1">Transcriptional coactivator in the bone morphogenetic protein (BMP)-signaling pathway. It positively modulates BMP signaling by interacting with SMAD1 and associating with CBP in the transcription complex. It contributes to the BMP-induced enhancement of cholinergic-neuron-specific gene expression (By similarity).</text>
</comment>
<comment type="subunit">
    <text evidence="1">Interacts with SMAD1 and CREB-binding protein (CBP). Forms a protein-DNA complex through its association with SMAD1 (By similarity).</text>
</comment>
<comment type="similarity">
    <text evidence="3">Belongs to the ZCCHC12 family.</text>
</comment>